<organism>
    <name type="scientific">Mus musculus</name>
    <name type="common">Mouse</name>
    <dbReference type="NCBI Taxonomy" id="10090"/>
    <lineage>
        <taxon>Eukaryota</taxon>
        <taxon>Metazoa</taxon>
        <taxon>Chordata</taxon>
        <taxon>Craniata</taxon>
        <taxon>Vertebrata</taxon>
        <taxon>Euteleostomi</taxon>
        <taxon>Mammalia</taxon>
        <taxon>Eutheria</taxon>
        <taxon>Euarchontoglires</taxon>
        <taxon>Glires</taxon>
        <taxon>Rodentia</taxon>
        <taxon>Myomorpha</taxon>
        <taxon>Muroidea</taxon>
        <taxon>Muridae</taxon>
        <taxon>Murinae</taxon>
        <taxon>Mus</taxon>
        <taxon>Mus</taxon>
    </lineage>
</organism>
<protein>
    <recommendedName>
        <fullName>Neuroligin-3</fullName>
    </recommendedName>
    <alternativeName>
        <fullName>Gliotactin homolog</fullName>
    </alternativeName>
</protein>
<comment type="function">
    <text evidence="6 11">Cell surface protein involved in cell-cell-interactions via its interactions with neurexin family members. Plays a role in synapse function and synaptic signal transmission, and probably mediates its effects by recruiting and clustering other synaptic proteins. May promote the initial formation of synapses, but is not essential for this. May also play a role in glia-glia or glia-neuron interactions in the developing peripheral nervous system.</text>
</comment>
<comment type="subunit">
    <text evidence="2 11">Homodimer, and heterodimer with NLGN1 and NLGN2 (By similarity). Interacts with neurexins NRXN1, NRXN2 and NRXN3 (By similarity). Interaction with neurexins is mediated by heparan sulfate glycan modification on neurexin (PubMed:30100184). Interacts (via its C-terminus) with DLG4/PSD-95 (via PDZ domain 3) (By similarity).</text>
</comment>
<comment type="subcellular location">
    <subcellularLocation>
        <location evidence="7">Cell membrane</location>
        <topology evidence="7">Single-pass type I membrane protein</topology>
    </subcellularLocation>
    <subcellularLocation>
        <location evidence="7">Synapse</location>
    </subcellularLocation>
    <text>Detected at both glutamatergic and GABAergic synapses.</text>
</comment>
<comment type="tissue specificity">
    <text evidence="5 6 7 8 10">Brain and arteries (at protein level). Detected in heart, brain, spleen, lung, liver, skeletal muscle, kidney and testis. Expressed in olfactory bulb and olfactory epithelium. Found in olfactory ensheathing glia but not in olfactory neurons, and in developing peripheral glia.</text>
</comment>
<comment type="developmental stage">
    <text evidence="5">Detected at embryonic day 17 dpc and postnatal day P1 in retinal astrocytes, spinal cord astrocytes and Schwann cells of the dorsal root ganglion.</text>
</comment>
<comment type="disruption phenotype">
    <text evidence="6 9">No obvious phenotype, but mice present subtle behavorial changes with reduced ultrasound vocalization and impaired response to olfactory cues. In addition, mice have reduced brain volume. Mice lacking both NLGN1 and NLGN3, or NLGN2 and NLGN3, are viable, but have impaired breathing, drastically reduced reproduction rates and striking deficits in raising their offspring. Mice lacking NLGN1, NLGN2 and NLGN3 are born at the expected Mendelian rate, but die shortly after birth due to respiratory failure. They do not show a significant change in the number of synapses, but synapse function is strongly impaired.</text>
</comment>
<comment type="similarity">
    <text evidence="12">Belongs to the type-B carboxylesterase/lipase family.</text>
</comment>
<sequence>MWLQPSLSLSPTPTVGRSLCLTLGFLSLVLRASTQAPAPTVNTHFGKLRGARVPLPSEILGPVDQYLGVPYAAPPIGEKRFLPPEPPPSWSGIRNATHFPPVCPQNIHTAVPEVMLPVWFTANLDIVATYIQEPNEDCLYLNVYVPTEDGSGAKKQGEDLADNDGDEDEDIRDSGAKPVMVYIHGGSYMEGTGNMIDGSVLASYGNVIVITLNYRVGVLGFLSTGDQAAKGNYGLLDQIQALRWVSENIAFFGGDPRRITVFGSGIGASCVSLLTLSHHSEGLFQRAIIQSGSALSSWAVNYQPVKYTSLLADKVGCNVLDTVDMVDCLRQKSAKELVEQDIQPARYHVAFGPVIDGDVIPDDPEILMEQGEFLNYDIMLGVNQGEGLKFVEGVVDPEDGVSGTDFDYSVSNFVDNLYGYPEGKDTLRETIKFMYTDWADRDNPETRRKTLVALFTDHQWVEPSVVTADLHARYGSPTYFYAFYHHCQSLMKPAWSDAAHGDEVPYVFGVPMVGPTDLFPCNFSKNDVMLSAVVMTYWTNFAKTGDPNKPVPQDTKFIHTKANRFEEVAWSKYNPRDQLYLHIGLKPRVRDHYRATKVAFWKHLVPHLYNLHDMFHYTSTTTKVPPPDTTHSSHITRRPNGKTWSTKRPAISPAYSNENAPGSWNGDQDAGPLLVENPRDYSTELSVTIAVGASLLFLNVLAFAALYYRKDKRRQEPLRQPSPQRGTGAPELGTAPEEELAALQLGPTHHECEAGPPHDTLRLTALPDYTLTLRRSPDDIPLMTPNTITMIPNSLVGLQTLHPYNTFAAGFNSTGLPHSHSTTRV</sequence>
<keyword id="KW-0002">3D-structure</keyword>
<keyword id="KW-0130">Cell adhesion</keyword>
<keyword id="KW-1003">Cell membrane</keyword>
<keyword id="KW-1015">Disulfide bond</keyword>
<keyword id="KW-0325">Glycoprotein</keyword>
<keyword id="KW-0472">Membrane</keyword>
<keyword id="KW-0597">Phosphoprotein</keyword>
<keyword id="KW-1185">Reference proteome</keyword>
<keyword id="KW-0732">Signal</keyword>
<keyword id="KW-0770">Synapse</keyword>
<keyword id="KW-0812">Transmembrane</keyword>
<keyword id="KW-1133">Transmembrane helix</keyword>
<feature type="signal peptide" evidence="3">
    <location>
        <begin position="1"/>
        <end position="34"/>
    </location>
</feature>
<feature type="chain" id="PRO_0000008646" description="Neuroligin-3">
    <location>
        <begin position="35"/>
        <end position="825"/>
    </location>
</feature>
<feature type="topological domain" description="Extracellular" evidence="3">
    <location>
        <begin position="35"/>
        <end position="686"/>
    </location>
</feature>
<feature type="transmembrane region" description="Helical" evidence="3">
    <location>
        <begin position="687"/>
        <end position="707"/>
    </location>
</feature>
<feature type="topological domain" description="Cytoplasmic" evidence="3">
    <location>
        <begin position="708"/>
        <end position="825"/>
    </location>
</feature>
<feature type="region of interest" description="Disordered" evidence="4">
    <location>
        <begin position="151"/>
        <end position="172"/>
    </location>
</feature>
<feature type="region of interest" description="Disordered" evidence="4">
    <location>
        <begin position="622"/>
        <end position="668"/>
    </location>
</feature>
<feature type="compositionally biased region" description="Acidic residues" evidence="4">
    <location>
        <begin position="159"/>
        <end position="171"/>
    </location>
</feature>
<feature type="compositionally biased region" description="Polar residues" evidence="4">
    <location>
        <begin position="622"/>
        <end position="633"/>
    </location>
</feature>
<feature type="compositionally biased region" description="Polar residues" evidence="4">
    <location>
        <begin position="654"/>
        <end position="666"/>
    </location>
</feature>
<feature type="modified residue" description="Phosphoserine" evidence="2">
    <location>
        <position position="722"/>
    </location>
</feature>
<feature type="modified residue" description="Phosphotyrosine" evidence="13">
    <location>
        <position position="769"/>
    </location>
</feature>
<feature type="glycosylation site" description="N-linked (GlcNAc...) asparagine" evidence="3">
    <location>
        <position position="95"/>
    </location>
</feature>
<feature type="glycosylation site" description="N-linked (GlcNAc...) asparagine" evidence="3">
    <location>
        <position position="522"/>
    </location>
</feature>
<feature type="disulfide bond" evidence="1">
    <location>
        <begin position="103"/>
        <end position="138"/>
    </location>
</feature>
<feature type="disulfide bond" evidence="1">
    <location>
        <begin position="317"/>
        <end position="328"/>
    </location>
</feature>
<feature type="disulfide bond" evidence="1">
    <location>
        <begin position="487"/>
        <end position="521"/>
    </location>
</feature>
<feature type="mutagenesis site" description="Reduced presynaptic differentiation." evidence="11">
    <original>KPRVR</original>
    <variation>APAVA</variation>
    <location>
        <begin position="586"/>
        <end position="590"/>
    </location>
</feature>
<feature type="sequence conflict" description="In Ref. 1; BAC30207." evidence="12" ref="1">
    <original>D</original>
    <variation>E</variation>
    <location>
        <position position="64"/>
    </location>
</feature>
<feature type="sequence conflict" description="In Ref. 1; BAC31918." evidence="12" ref="1">
    <original>Q</original>
    <variation>K</variation>
    <location>
        <position position="459"/>
    </location>
</feature>
<feature type="strand" evidence="14">
    <location>
        <begin position="40"/>
        <end position="43"/>
    </location>
</feature>
<feature type="strand" evidence="14">
    <location>
        <begin position="46"/>
        <end position="49"/>
    </location>
</feature>
<feature type="strand" evidence="14">
    <location>
        <begin position="51"/>
        <end position="53"/>
    </location>
</feature>
<feature type="strand" evidence="14">
    <location>
        <begin position="56"/>
        <end position="60"/>
    </location>
</feature>
<feature type="strand" evidence="14">
    <location>
        <begin position="63"/>
        <end position="70"/>
    </location>
</feature>
<feature type="helix" evidence="14">
    <location>
        <begin position="77"/>
        <end position="79"/>
    </location>
</feature>
<feature type="strand" evidence="14">
    <location>
        <begin position="91"/>
        <end position="95"/>
    </location>
</feature>
<feature type="strand" evidence="14">
    <location>
        <begin position="107"/>
        <end position="109"/>
    </location>
</feature>
<feature type="turn" evidence="14">
    <location>
        <begin position="113"/>
        <end position="115"/>
    </location>
</feature>
<feature type="helix" evidence="14">
    <location>
        <begin position="118"/>
        <end position="121"/>
    </location>
</feature>
<feature type="helix" evidence="14">
    <location>
        <begin position="124"/>
        <end position="131"/>
    </location>
</feature>
<feature type="strand" evidence="14">
    <location>
        <begin position="140"/>
        <end position="146"/>
    </location>
</feature>
<feature type="strand" evidence="14">
    <location>
        <begin position="176"/>
        <end position="183"/>
    </location>
</feature>
<feature type="strand" evidence="14">
    <location>
        <begin position="186"/>
        <end position="190"/>
    </location>
</feature>
<feature type="helix" evidence="14">
    <location>
        <begin position="193"/>
        <end position="195"/>
    </location>
</feature>
<feature type="helix" evidence="14">
    <location>
        <begin position="199"/>
        <end position="205"/>
    </location>
</feature>
<feature type="strand" evidence="14">
    <location>
        <begin position="208"/>
        <end position="212"/>
    </location>
</feature>
<feature type="helix" evidence="14">
    <location>
        <begin position="217"/>
        <end position="221"/>
    </location>
</feature>
<feature type="strand" evidence="14">
    <location>
        <begin position="225"/>
        <end position="228"/>
    </location>
</feature>
<feature type="helix" evidence="14">
    <location>
        <begin position="233"/>
        <end position="248"/>
    </location>
</feature>
<feature type="helix" evidence="14">
    <location>
        <begin position="249"/>
        <end position="252"/>
    </location>
</feature>
<feature type="strand" evidence="14">
    <location>
        <begin position="254"/>
        <end position="264"/>
    </location>
</feature>
<feature type="helix" evidence="14">
    <location>
        <begin position="266"/>
        <end position="275"/>
    </location>
</feature>
<feature type="turn" evidence="14">
    <location>
        <begin position="279"/>
        <end position="283"/>
    </location>
</feature>
<feature type="strand" evidence="14">
    <location>
        <begin position="285"/>
        <end position="291"/>
    </location>
</feature>
<feature type="turn" evidence="14">
    <location>
        <begin position="297"/>
        <end position="299"/>
    </location>
</feature>
<feature type="helix" evidence="14">
    <location>
        <begin position="304"/>
        <end position="314"/>
    </location>
</feature>
<feature type="helix" evidence="14">
    <location>
        <begin position="322"/>
        <end position="331"/>
    </location>
</feature>
<feature type="helix" evidence="14">
    <location>
        <begin position="334"/>
        <end position="339"/>
    </location>
</feature>
<feature type="strand" evidence="14">
    <location>
        <begin position="350"/>
        <end position="352"/>
    </location>
</feature>
<feature type="strand" evidence="14">
    <location>
        <begin position="357"/>
        <end position="360"/>
    </location>
</feature>
<feature type="helix" evidence="14">
    <location>
        <begin position="364"/>
        <end position="370"/>
    </location>
</feature>
<feature type="helix" evidence="14">
    <location>
        <begin position="372"/>
        <end position="375"/>
    </location>
</feature>
<feature type="strand" evidence="14">
    <location>
        <begin position="376"/>
        <end position="383"/>
    </location>
</feature>
<feature type="turn" evidence="14">
    <location>
        <begin position="384"/>
        <end position="387"/>
    </location>
</feature>
<feature type="helix" evidence="14">
    <location>
        <begin position="388"/>
        <end position="390"/>
    </location>
</feature>
<feature type="helix" evidence="14">
    <location>
        <begin position="392"/>
        <end position="394"/>
    </location>
</feature>
<feature type="helix" evidence="14">
    <location>
        <begin position="403"/>
        <end position="418"/>
    </location>
</feature>
<feature type="helix" evidence="14">
    <location>
        <begin position="424"/>
        <end position="434"/>
    </location>
</feature>
<feature type="strand" evidence="14">
    <location>
        <begin position="440"/>
        <end position="442"/>
    </location>
</feature>
<feature type="helix" evidence="14">
    <location>
        <begin position="444"/>
        <end position="459"/>
    </location>
</feature>
<feature type="helix" evidence="14">
    <location>
        <begin position="461"/>
        <end position="471"/>
    </location>
</feature>
<feature type="strand" evidence="14">
    <location>
        <begin position="478"/>
        <end position="483"/>
    </location>
</feature>
<feature type="strand" evidence="14">
    <location>
        <begin position="490"/>
        <end position="492"/>
    </location>
</feature>
<feature type="turn" evidence="14">
    <location>
        <begin position="500"/>
        <end position="503"/>
    </location>
</feature>
<feature type="helix" evidence="14">
    <location>
        <begin position="504"/>
        <end position="507"/>
    </location>
</feature>
<feature type="helix" evidence="14">
    <location>
        <begin position="510"/>
        <end position="512"/>
    </location>
</feature>
<feature type="helix" evidence="14">
    <location>
        <begin position="525"/>
        <end position="544"/>
    </location>
</feature>
<feature type="strand" evidence="14">
    <location>
        <begin position="549"/>
        <end position="551"/>
    </location>
</feature>
<feature type="turn" evidence="14">
    <location>
        <begin position="575"/>
        <end position="577"/>
    </location>
</feature>
<feature type="strand" evidence="14">
    <location>
        <begin position="579"/>
        <end position="586"/>
    </location>
</feature>
<feature type="strand" evidence="14">
    <location>
        <begin position="588"/>
        <end position="592"/>
    </location>
</feature>
<feature type="helix" evidence="14">
    <location>
        <begin position="595"/>
        <end position="602"/>
    </location>
</feature>
<feature type="helix" evidence="14">
    <location>
        <begin position="604"/>
        <end position="608"/>
    </location>
</feature>
<name>NLGN3_MOUSE</name>
<proteinExistence type="evidence at protein level"/>
<evidence type="ECO:0000250" key="1"/>
<evidence type="ECO:0000250" key="2">
    <source>
        <dbReference type="UniProtKB" id="Q62889"/>
    </source>
</evidence>
<evidence type="ECO:0000255" key="3"/>
<evidence type="ECO:0000256" key="4">
    <source>
        <dbReference type="SAM" id="MobiDB-lite"/>
    </source>
</evidence>
<evidence type="ECO:0000269" key="5">
    <source>
    </source>
</evidence>
<evidence type="ECO:0000269" key="6">
    <source>
    </source>
</evidence>
<evidence type="ECO:0000269" key="7">
    <source>
    </source>
</evidence>
<evidence type="ECO:0000269" key="8">
    <source>
    </source>
</evidence>
<evidence type="ECO:0000269" key="9">
    <source>
    </source>
</evidence>
<evidence type="ECO:0000269" key="10">
    <source>
    </source>
</evidence>
<evidence type="ECO:0000269" key="11">
    <source>
    </source>
</evidence>
<evidence type="ECO:0000305" key="12"/>
<evidence type="ECO:0007744" key="13">
    <source>
    </source>
</evidence>
<evidence type="ECO:0007829" key="14">
    <source>
        <dbReference type="PDB" id="7CEE"/>
    </source>
</evidence>
<reference key="1">
    <citation type="journal article" date="2005" name="Science">
        <title>The transcriptional landscape of the mammalian genome.</title>
        <authorList>
            <person name="Carninci P."/>
            <person name="Kasukawa T."/>
            <person name="Katayama S."/>
            <person name="Gough J."/>
            <person name="Frith M.C."/>
            <person name="Maeda N."/>
            <person name="Oyama R."/>
            <person name="Ravasi T."/>
            <person name="Lenhard B."/>
            <person name="Wells C."/>
            <person name="Kodzius R."/>
            <person name="Shimokawa K."/>
            <person name="Bajic V.B."/>
            <person name="Brenner S.E."/>
            <person name="Batalov S."/>
            <person name="Forrest A.R."/>
            <person name="Zavolan M."/>
            <person name="Davis M.J."/>
            <person name="Wilming L.G."/>
            <person name="Aidinis V."/>
            <person name="Allen J.E."/>
            <person name="Ambesi-Impiombato A."/>
            <person name="Apweiler R."/>
            <person name="Aturaliya R.N."/>
            <person name="Bailey T.L."/>
            <person name="Bansal M."/>
            <person name="Baxter L."/>
            <person name="Beisel K.W."/>
            <person name="Bersano T."/>
            <person name="Bono H."/>
            <person name="Chalk A.M."/>
            <person name="Chiu K.P."/>
            <person name="Choudhary V."/>
            <person name="Christoffels A."/>
            <person name="Clutterbuck D.R."/>
            <person name="Crowe M.L."/>
            <person name="Dalla E."/>
            <person name="Dalrymple B.P."/>
            <person name="de Bono B."/>
            <person name="Della Gatta G."/>
            <person name="di Bernardo D."/>
            <person name="Down T."/>
            <person name="Engstrom P."/>
            <person name="Fagiolini M."/>
            <person name="Faulkner G."/>
            <person name="Fletcher C.F."/>
            <person name="Fukushima T."/>
            <person name="Furuno M."/>
            <person name="Futaki S."/>
            <person name="Gariboldi M."/>
            <person name="Georgii-Hemming P."/>
            <person name="Gingeras T.R."/>
            <person name="Gojobori T."/>
            <person name="Green R.E."/>
            <person name="Gustincich S."/>
            <person name="Harbers M."/>
            <person name="Hayashi Y."/>
            <person name="Hensch T.K."/>
            <person name="Hirokawa N."/>
            <person name="Hill D."/>
            <person name="Huminiecki L."/>
            <person name="Iacono M."/>
            <person name="Ikeo K."/>
            <person name="Iwama A."/>
            <person name="Ishikawa T."/>
            <person name="Jakt M."/>
            <person name="Kanapin A."/>
            <person name="Katoh M."/>
            <person name="Kawasawa Y."/>
            <person name="Kelso J."/>
            <person name="Kitamura H."/>
            <person name="Kitano H."/>
            <person name="Kollias G."/>
            <person name="Krishnan S.P."/>
            <person name="Kruger A."/>
            <person name="Kummerfeld S.K."/>
            <person name="Kurochkin I.V."/>
            <person name="Lareau L.F."/>
            <person name="Lazarevic D."/>
            <person name="Lipovich L."/>
            <person name="Liu J."/>
            <person name="Liuni S."/>
            <person name="McWilliam S."/>
            <person name="Madan Babu M."/>
            <person name="Madera M."/>
            <person name="Marchionni L."/>
            <person name="Matsuda H."/>
            <person name="Matsuzawa S."/>
            <person name="Miki H."/>
            <person name="Mignone F."/>
            <person name="Miyake S."/>
            <person name="Morris K."/>
            <person name="Mottagui-Tabar S."/>
            <person name="Mulder N."/>
            <person name="Nakano N."/>
            <person name="Nakauchi H."/>
            <person name="Ng P."/>
            <person name="Nilsson R."/>
            <person name="Nishiguchi S."/>
            <person name="Nishikawa S."/>
            <person name="Nori F."/>
            <person name="Ohara O."/>
            <person name="Okazaki Y."/>
            <person name="Orlando V."/>
            <person name="Pang K.C."/>
            <person name="Pavan W.J."/>
            <person name="Pavesi G."/>
            <person name="Pesole G."/>
            <person name="Petrovsky N."/>
            <person name="Piazza S."/>
            <person name="Reed J."/>
            <person name="Reid J.F."/>
            <person name="Ring B.Z."/>
            <person name="Ringwald M."/>
            <person name="Rost B."/>
            <person name="Ruan Y."/>
            <person name="Salzberg S.L."/>
            <person name="Sandelin A."/>
            <person name="Schneider C."/>
            <person name="Schoenbach C."/>
            <person name="Sekiguchi K."/>
            <person name="Semple C.A."/>
            <person name="Seno S."/>
            <person name="Sessa L."/>
            <person name="Sheng Y."/>
            <person name="Shibata Y."/>
            <person name="Shimada H."/>
            <person name="Shimada K."/>
            <person name="Silva D."/>
            <person name="Sinclair B."/>
            <person name="Sperling S."/>
            <person name="Stupka E."/>
            <person name="Sugiura K."/>
            <person name="Sultana R."/>
            <person name="Takenaka Y."/>
            <person name="Taki K."/>
            <person name="Tammoja K."/>
            <person name="Tan S.L."/>
            <person name="Tang S."/>
            <person name="Taylor M.S."/>
            <person name="Tegner J."/>
            <person name="Teichmann S.A."/>
            <person name="Ueda H.R."/>
            <person name="van Nimwegen E."/>
            <person name="Verardo R."/>
            <person name="Wei C.L."/>
            <person name="Yagi K."/>
            <person name="Yamanishi H."/>
            <person name="Zabarovsky E."/>
            <person name="Zhu S."/>
            <person name="Zimmer A."/>
            <person name="Hide W."/>
            <person name="Bult C."/>
            <person name="Grimmond S.M."/>
            <person name="Teasdale R.D."/>
            <person name="Liu E.T."/>
            <person name="Brusic V."/>
            <person name="Quackenbush J."/>
            <person name="Wahlestedt C."/>
            <person name="Mattick J.S."/>
            <person name="Hume D.A."/>
            <person name="Kai C."/>
            <person name="Sasaki D."/>
            <person name="Tomaru Y."/>
            <person name="Fukuda S."/>
            <person name="Kanamori-Katayama M."/>
            <person name="Suzuki M."/>
            <person name="Aoki J."/>
            <person name="Arakawa T."/>
            <person name="Iida J."/>
            <person name="Imamura K."/>
            <person name="Itoh M."/>
            <person name="Kato T."/>
            <person name="Kawaji H."/>
            <person name="Kawagashira N."/>
            <person name="Kawashima T."/>
            <person name="Kojima M."/>
            <person name="Kondo S."/>
            <person name="Konno H."/>
            <person name="Nakano K."/>
            <person name="Ninomiya N."/>
            <person name="Nishio T."/>
            <person name="Okada M."/>
            <person name="Plessy C."/>
            <person name="Shibata K."/>
            <person name="Shiraki T."/>
            <person name="Suzuki S."/>
            <person name="Tagami M."/>
            <person name="Waki K."/>
            <person name="Watahiki A."/>
            <person name="Okamura-Oho Y."/>
            <person name="Suzuki H."/>
            <person name="Kawai J."/>
            <person name="Hayashizaki Y."/>
        </authorList>
    </citation>
    <scope>NUCLEOTIDE SEQUENCE [LARGE SCALE MRNA]</scope>
    <source>
        <strain>C57BL/6J</strain>
        <tissue>Hypothalamus</tissue>
        <tissue>Retina</tissue>
    </source>
</reference>
<reference key="2">
    <citation type="journal article" date="2009" name="PLoS Biol.">
        <title>Lineage-specific biology revealed by a finished genome assembly of the mouse.</title>
        <authorList>
            <person name="Church D.M."/>
            <person name="Goodstadt L."/>
            <person name="Hillier L.W."/>
            <person name="Zody M.C."/>
            <person name="Goldstein S."/>
            <person name="She X."/>
            <person name="Bult C.J."/>
            <person name="Agarwala R."/>
            <person name="Cherry J.L."/>
            <person name="DiCuccio M."/>
            <person name="Hlavina W."/>
            <person name="Kapustin Y."/>
            <person name="Meric P."/>
            <person name="Maglott D."/>
            <person name="Birtle Z."/>
            <person name="Marques A.C."/>
            <person name="Graves T."/>
            <person name="Zhou S."/>
            <person name="Teague B."/>
            <person name="Potamousis K."/>
            <person name="Churas C."/>
            <person name="Place M."/>
            <person name="Herschleb J."/>
            <person name="Runnheim R."/>
            <person name="Forrest D."/>
            <person name="Amos-Landgraf J."/>
            <person name="Schwartz D.C."/>
            <person name="Cheng Z."/>
            <person name="Lindblad-Toh K."/>
            <person name="Eichler E.E."/>
            <person name="Ponting C.P."/>
        </authorList>
    </citation>
    <scope>NUCLEOTIDE SEQUENCE [LARGE SCALE GENOMIC DNA]</scope>
    <source>
        <strain>C57BL/6J</strain>
    </source>
</reference>
<reference key="3">
    <citation type="journal article" date="2001" name="Glia">
        <title>Neuroligin 3 is a vertebrate gliotactin expressed in the olfactory ensheathing glia, a growth-promoting class of macroglia.</title>
        <authorList>
            <person name="Gilbert M."/>
            <person name="Smith J."/>
            <person name="Roskams A.J."/>
            <person name="Auld V.J."/>
        </authorList>
    </citation>
    <scope>TISSUE SPECIFICITY</scope>
    <scope>DEVELOPMENTAL STAGE</scope>
</reference>
<reference key="4">
    <citation type="journal article" date="2006" name="Neuron">
        <title>Neuroligins determine synapse maturation and function.</title>
        <authorList>
            <person name="Varoqueaux F."/>
            <person name="Aramuni G."/>
            <person name="Rawson R.L."/>
            <person name="Mohrmann R."/>
            <person name="Missler M."/>
            <person name="Gottmann K."/>
            <person name="Zhang W."/>
            <person name="Sudhof T.C."/>
            <person name="Brose N."/>
        </authorList>
    </citation>
    <scope>DISRUPTION PHENOTYPE</scope>
    <scope>FUNCTION</scope>
    <scope>TISSUE SPECIFICITY</scope>
</reference>
<reference key="5">
    <citation type="journal article" date="2007" name="Eur. J. Neurosci.">
        <title>Neuroligin-3 is a neuronal adhesion protein at GABAergic and glutamatergic synapses.</title>
        <authorList>
            <person name="Budreck E.C."/>
            <person name="Scheiffele P."/>
        </authorList>
    </citation>
    <scope>INTERACTION WITH NLGN1 AND NLGN2</scope>
    <scope>SUBUNIT</scope>
    <scope>SUBCELLULAR LOCATION</scope>
    <scope>TISSUE SPECIFICITY</scope>
</reference>
<reference key="6">
    <citation type="journal article" date="2008" name="J. Proteome Res.">
        <title>Large-scale identification and evolution indexing of tyrosine phosphorylation sites from murine brain.</title>
        <authorList>
            <person name="Ballif B.A."/>
            <person name="Carey G.R."/>
            <person name="Sunyaev S.R."/>
            <person name="Gygi S.P."/>
        </authorList>
    </citation>
    <scope>PHOSPHORYLATION [LARGE SCALE ANALYSIS] AT TYR-769</scope>
    <scope>IDENTIFICATION BY MASS SPECTROMETRY [LARGE SCALE ANALYSIS]</scope>
    <source>
        <tissue>Brain</tissue>
    </source>
</reference>
<reference key="7">
    <citation type="journal article" date="2008" name="Proc. Natl. Acad. Sci. U.S.A.">
        <title>Unusually rapid evolution of neuroligin-4 in mice.</title>
        <authorList>
            <person name="Bolliger M.F."/>
            <person name="Pei J."/>
            <person name="Maxeiner S."/>
            <person name="Boucard A.A."/>
            <person name="Grishin N.V."/>
            <person name="Sudhof T.C."/>
        </authorList>
    </citation>
    <scope>TISSUE SPECIFICITY</scope>
</reference>
<reference key="8">
    <citation type="journal article" date="2009" name="Genes Brain Behav.">
        <title>Neuroligin-3-deficient mice: model of a monogenic heritable form of autism with an olfactory deficit.</title>
        <authorList>
            <person name="Radyushkin K."/>
            <person name="Hammerschmidt K."/>
            <person name="Boretius S."/>
            <person name="Varoqueaux F."/>
            <person name="El-Kordi A."/>
            <person name="Ronnenberg A."/>
            <person name="Winter D."/>
            <person name="Frahm J."/>
            <person name="Fischer J."/>
            <person name="Brose N."/>
            <person name="Ehrenreich H."/>
        </authorList>
    </citation>
    <scope>DISRUPTION PHENOTYPE</scope>
</reference>
<reference key="9">
    <citation type="journal article" date="2009" name="Proc. Natl. Acad. Sci. U.S.A.">
        <title>The synaptic proteins neurexins and neuroligins are widely expressed in the vascular system and contribute to its functions.</title>
        <authorList>
            <person name="Bottos A."/>
            <person name="Destro E."/>
            <person name="Rissone A."/>
            <person name="Graziano S."/>
            <person name="Cordara G."/>
            <person name="Assenzio B."/>
            <person name="Cera M.R."/>
            <person name="Mascia L."/>
            <person name="Bussolino F."/>
            <person name="Arese M."/>
        </authorList>
    </citation>
    <scope>TISSUE SPECIFICITY</scope>
</reference>
<reference key="10">
    <citation type="journal article" date="2010" name="Cell">
        <title>A tissue-specific atlas of mouse protein phosphorylation and expression.</title>
        <authorList>
            <person name="Huttlin E.L."/>
            <person name="Jedrychowski M.P."/>
            <person name="Elias J.E."/>
            <person name="Goswami T."/>
            <person name="Rad R."/>
            <person name="Beausoleil S.A."/>
            <person name="Villen J."/>
            <person name="Haas W."/>
            <person name="Sowa M.E."/>
            <person name="Gygi S.P."/>
        </authorList>
    </citation>
    <scope>IDENTIFICATION BY MASS SPECTROMETRY [LARGE SCALE ANALYSIS]</scope>
    <source>
        <tissue>Brain</tissue>
    </source>
</reference>
<reference key="11">
    <citation type="journal article" date="2018" name="Cell">
        <title>Heparan Sulfate Organizes Neuronal Synapses through Neurexin Partnerships.</title>
        <authorList>
            <person name="Zhang P."/>
            <person name="Lu H."/>
            <person name="Peixoto R.T."/>
            <person name="Pines M.K."/>
            <person name="Ge Y."/>
            <person name="Oku S."/>
            <person name="Siddiqui T.J."/>
            <person name="Xie Y."/>
            <person name="Wu W."/>
            <person name="Archer-Hartmann S."/>
            <person name="Yoshida K."/>
            <person name="Tanaka K.F."/>
            <person name="Aricescu A.R."/>
            <person name="Azadi P."/>
            <person name="Gordon M.D."/>
            <person name="Sabatini B.L."/>
            <person name="Wong R.O.L."/>
            <person name="Craig A.M."/>
        </authorList>
    </citation>
    <scope>FUNCTION</scope>
    <scope>INTERACTION WITH NEUREXINS</scope>
    <scope>MUTAGENESIS OF 586-LYS--ARG-590</scope>
</reference>
<dbReference type="EMBL" id="AK039018">
    <property type="protein sequence ID" value="BAC30207.1"/>
    <property type="molecule type" value="mRNA"/>
</dbReference>
<dbReference type="EMBL" id="AK044438">
    <property type="protein sequence ID" value="BAC31918.1"/>
    <property type="molecule type" value="mRNA"/>
</dbReference>
<dbReference type="EMBL" id="AL683892">
    <property type="status" value="NOT_ANNOTATED_CDS"/>
    <property type="molecule type" value="Genomic_DNA"/>
</dbReference>
<dbReference type="CCDS" id="CCDS30313.1"/>
<dbReference type="RefSeq" id="NP_766520.2">
    <property type="nucleotide sequence ID" value="NM_172932.4"/>
</dbReference>
<dbReference type="PDB" id="7CEE">
    <property type="method" value="X-ray"/>
    <property type="resolution" value="2.76 A"/>
    <property type="chains" value="A/B=36-684"/>
</dbReference>
<dbReference type="PDB" id="7CEG">
    <property type="method" value="X-ray"/>
    <property type="resolution" value="3.85 A"/>
    <property type="chains" value="B=37-615"/>
</dbReference>
<dbReference type="PDBsum" id="7CEE"/>
<dbReference type="PDBsum" id="7CEG"/>
<dbReference type="SMR" id="Q8BYM5"/>
<dbReference type="BioGRID" id="232793">
    <property type="interactions" value="9"/>
</dbReference>
<dbReference type="FunCoup" id="Q8BYM5">
    <property type="interactions" value="427"/>
</dbReference>
<dbReference type="IntAct" id="Q8BYM5">
    <property type="interactions" value="3"/>
</dbReference>
<dbReference type="MINT" id="Q8BYM5"/>
<dbReference type="STRING" id="10090.ENSMUSP00000066304"/>
<dbReference type="ESTHER" id="mouse-3neur">
    <property type="family name" value="Neuroligin"/>
</dbReference>
<dbReference type="MEROPS" id="S09.987"/>
<dbReference type="GlyCosmos" id="Q8BYM5">
    <property type="glycosylation" value="2 sites, No reported glycans"/>
</dbReference>
<dbReference type="GlyGen" id="Q8BYM5">
    <property type="glycosylation" value="5 sites, 1 O-linked glycan (1 site)"/>
</dbReference>
<dbReference type="iPTMnet" id="Q8BYM5"/>
<dbReference type="PhosphoSitePlus" id="Q8BYM5"/>
<dbReference type="SwissPalm" id="Q8BYM5"/>
<dbReference type="PaxDb" id="10090-ENSMUSP00000066304"/>
<dbReference type="ProteomicsDB" id="293575"/>
<dbReference type="ABCD" id="Q8BYM5">
    <property type="antibodies" value="1 sequenced antibody"/>
</dbReference>
<dbReference type="Antibodypedia" id="561">
    <property type="antibodies" value="296 antibodies from 36 providers"/>
</dbReference>
<dbReference type="DNASU" id="245537"/>
<dbReference type="Ensembl" id="ENSMUST00000065858.3">
    <property type="protein sequence ID" value="ENSMUSP00000066304.3"/>
    <property type="gene ID" value="ENSMUSG00000031302.17"/>
</dbReference>
<dbReference type="GeneID" id="245537"/>
<dbReference type="KEGG" id="mmu:245537"/>
<dbReference type="UCSC" id="uc009txj.3">
    <property type="organism name" value="mouse"/>
</dbReference>
<dbReference type="AGR" id="MGI:2444609"/>
<dbReference type="CTD" id="54413"/>
<dbReference type="MGI" id="MGI:2444609">
    <property type="gene designation" value="Nlgn3"/>
</dbReference>
<dbReference type="VEuPathDB" id="HostDB:ENSMUSG00000031302"/>
<dbReference type="eggNOG" id="KOG1516">
    <property type="taxonomic scope" value="Eukaryota"/>
</dbReference>
<dbReference type="GeneTree" id="ENSGT00940000159580"/>
<dbReference type="InParanoid" id="Q8BYM5"/>
<dbReference type="OrthoDB" id="19653at2759"/>
<dbReference type="TreeFam" id="TF326187"/>
<dbReference type="Reactome" id="R-MMU-6794361">
    <property type="pathway name" value="Neurexins and neuroligins"/>
</dbReference>
<dbReference type="BioGRID-ORCS" id="245537">
    <property type="hits" value="2 hits in 62 CRISPR screens"/>
</dbReference>
<dbReference type="CD-CODE" id="CE726F99">
    <property type="entry name" value="Postsynaptic density"/>
</dbReference>
<dbReference type="PRO" id="PR:Q8BYM5"/>
<dbReference type="Proteomes" id="UP000000589">
    <property type="component" value="Chromosome X"/>
</dbReference>
<dbReference type="RNAct" id="Q8BYM5">
    <property type="molecule type" value="protein"/>
</dbReference>
<dbReference type="Bgee" id="ENSMUSG00000031302">
    <property type="expression patterns" value="Expressed in dentate gyrus of hippocampal formation granule cell and 116 other cell types or tissues"/>
</dbReference>
<dbReference type="ExpressionAtlas" id="Q8BYM5">
    <property type="expression patterns" value="baseline and differential"/>
</dbReference>
<dbReference type="GO" id="GO:0009986">
    <property type="term" value="C:cell surface"/>
    <property type="evidence" value="ECO:0000250"/>
    <property type="project" value="BHF-UCL"/>
</dbReference>
<dbReference type="GO" id="GO:0030139">
    <property type="term" value="C:endocytic vesicle"/>
    <property type="evidence" value="ECO:0000250"/>
    <property type="project" value="BHF-UCL"/>
</dbReference>
<dbReference type="GO" id="GO:0060076">
    <property type="term" value="C:excitatory synapse"/>
    <property type="evidence" value="ECO:0000250"/>
    <property type="project" value="BHF-UCL"/>
</dbReference>
<dbReference type="GO" id="GO:0045211">
    <property type="term" value="C:postsynaptic membrane"/>
    <property type="evidence" value="ECO:0000250"/>
    <property type="project" value="BHF-UCL"/>
</dbReference>
<dbReference type="GO" id="GO:0045202">
    <property type="term" value="C:synapse"/>
    <property type="evidence" value="ECO:0000266"/>
    <property type="project" value="MGI"/>
</dbReference>
<dbReference type="GO" id="GO:0050839">
    <property type="term" value="F:cell adhesion molecule binding"/>
    <property type="evidence" value="ECO:0000250"/>
    <property type="project" value="BHF-UCL"/>
</dbReference>
<dbReference type="GO" id="GO:0042043">
    <property type="term" value="F:neurexin family protein binding"/>
    <property type="evidence" value="ECO:0000250"/>
    <property type="project" value="BHF-UCL"/>
</dbReference>
<dbReference type="GO" id="GO:0048675">
    <property type="term" value="P:axon extension"/>
    <property type="evidence" value="ECO:0000250"/>
    <property type="project" value="BHF-UCL"/>
</dbReference>
<dbReference type="GO" id="GO:0060079">
    <property type="term" value="P:excitatory postsynaptic potential"/>
    <property type="evidence" value="ECO:0000315"/>
    <property type="project" value="BHF-UCL"/>
</dbReference>
<dbReference type="GO" id="GO:0060080">
    <property type="term" value="P:inhibitory postsynaptic potential"/>
    <property type="evidence" value="ECO:0000315"/>
    <property type="project" value="BHF-UCL"/>
</dbReference>
<dbReference type="GO" id="GO:0060291">
    <property type="term" value="P:long-term synaptic potentiation"/>
    <property type="evidence" value="ECO:0000315"/>
    <property type="project" value="CACAO"/>
</dbReference>
<dbReference type="GO" id="GO:0050804">
    <property type="term" value="P:modulation of chemical synaptic transmission"/>
    <property type="evidence" value="ECO:0000316"/>
    <property type="project" value="MGI"/>
</dbReference>
<dbReference type="GO" id="GO:0061002">
    <property type="term" value="P:negative regulation of dendritic spine morphogenesis"/>
    <property type="evidence" value="ECO:0000315"/>
    <property type="project" value="CACAO"/>
</dbReference>
<dbReference type="GO" id="GO:0090394">
    <property type="term" value="P:negative regulation of excitatory postsynaptic potential"/>
    <property type="evidence" value="ECO:0000315"/>
    <property type="project" value="CACAO"/>
</dbReference>
<dbReference type="GO" id="GO:0007158">
    <property type="term" value="P:neuron cell-cell adhesion"/>
    <property type="evidence" value="ECO:0000250"/>
    <property type="project" value="BHF-UCL"/>
</dbReference>
<dbReference type="GO" id="GO:0048709">
    <property type="term" value="P:oligodendrocyte differentiation"/>
    <property type="evidence" value="ECO:0000315"/>
    <property type="project" value="MGI"/>
</dbReference>
<dbReference type="GO" id="GO:2000969">
    <property type="term" value="P:positive regulation of AMPA receptor activity"/>
    <property type="evidence" value="ECO:0000315"/>
    <property type="project" value="CACAO"/>
</dbReference>
<dbReference type="GO" id="GO:2000463">
    <property type="term" value="P:positive regulation of excitatory postsynaptic potential"/>
    <property type="evidence" value="ECO:0000315"/>
    <property type="project" value="BHF-UCL"/>
</dbReference>
<dbReference type="GO" id="GO:1900451">
    <property type="term" value="P:positive regulation of glutamate receptor signaling pathway"/>
    <property type="evidence" value="ECO:0000315"/>
    <property type="project" value="BHF-UCL"/>
</dbReference>
<dbReference type="GO" id="GO:0051965">
    <property type="term" value="P:positive regulation of synapse assembly"/>
    <property type="evidence" value="ECO:0000315"/>
    <property type="project" value="CACAO"/>
</dbReference>
<dbReference type="GO" id="GO:0051968">
    <property type="term" value="P:positive regulation of synaptic transmission, glutamatergic"/>
    <property type="evidence" value="ECO:0000315"/>
    <property type="project" value="BHF-UCL"/>
</dbReference>
<dbReference type="GO" id="GO:2000809">
    <property type="term" value="P:positive regulation of synaptic vesicle clustering"/>
    <property type="evidence" value="ECO:0000315"/>
    <property type="project" value="CACAO"/>
</dbReference>
<dbReference type="GO" id="GO:0097104">
    <property type="term" value="P:postsynaptic membrane assembly"/>
    <property type="evidence" value="ECO:0000315"/>
    <property type="project" value="BHF-UCL"/>
</dbReference>
<dbReference type="GO" id="GO:0097105">
    <property type="term" value="P:presynaptic membrane assembly"/>
    <property type="evidence" value="ECO:0000250"/>
    <property type="project" value="BHF-UCL"/>
</dbReference>
<dbReference type="GO" id="GO:0006898">
    <property type="term" value="P:receptor-mediated endocytosis"/>
    <property type="evidence" value="ECO:0000250"/>
    <property type="project" value="BHF-UCL"/>
</dbReference>
<dbReference type="GO" id="GO:2000311">
    <property type="term" value="P:regulation of AMPA receptor activity"/>
    <property type="evidence" value="ECO:0000315"/>
    <property type="project" value="CACAO"/>
</dbReference>
<dbReference type="GO" id="GO:0061001">
    <property type="term" value="P:regulation of dendritic spine morphogenesis"/>
    <property type="evidence" value="ECO:0000315"/>
    <property type="project" value="BHF-UCL"/>
</dbReference>
<dbReference type="GO" id="GO:1900271">
    <property type="term" value="P:regulation of long-term synaptic potentiation"/>
    <property type="evidence" value="ECO:0000315"/>
    <property type="project" value="BHF-UCL"/>
</dbReference>
<dbReference type="GO" id="GO:2000310">
    <property type="term" value="P:regulation of NMDA receptor activity"/>
    <property type="evidence" value="ECO:0000315"/>
    <property type="project" value="CACAO"/>
</dbReference>
<dbReference type="GO" id="GO:0002087">
    <property type="term" value="P:regulation of respiratory gaseous exchange by nervous system process"/>
    <property type="evidence" value="ECO:0000316"/>
    <property type="project" value="MGI"/>
</dbReference>
<dbReference type="GO" id="GO:0051966">
    <property type="term" value="P:regulation of synaptic transmission, glutamatergic"/>
    <property type="evidence" value="ECO:0000315"/>
    <property type="project" value="BHF-UCL"/>
</dbReference>
<dbReference type="GO" id="GO:2000331">
    <property type="term" value="P:regulation of terminal button organization"/>
    <property type="evidence" value="ECO:0000315"/>
    <property type="project" value="BHF-UCL"/>
</dbReference>
<dbReference type="GO" id="GO:0060024">
    <property type="term" value="P:rhythmic synaptic transmission"/>
    <property type="evidence" value="ECO:0000250"/>
    <property type="project" value="BHF-UCL"/>
</dbReference>
<dbReference type="GO" id="GO:0035176">
    <property type="term" value="P:social behavior"/>
    <property type="evidence" value="ECO:0000315"/>
    <property type="project" value="CACAO"/>
</dbReference>
<dbReference type="GO" id="GO:0050808">
    <property type="term" value="P:synapse organization"/>
    <property type="evidence" value="ECO:0000316"/>
    <property type="project" value="MGI"/>
</dbReference>
<dbReference type="GO" id="GO:0008542">
    <property type="term" value="P:visual learning"/>
    <property type="evidence" value="ECO:0000315"/>
    <property type="project" value="MGI"/>
</dbReference>
<dbReference type="FunFam" id="3.40.50.1820:FF:000001">
    <property type="entry name" value="Neuroligin 3 isoform"/>
    <property type="match status" value="1"/>
</dbReference>
<dbReference type="Gene3D" id="3.40.50.1820">
    <property type="entry name" value="alpha/beta hydrolase"/>
    <property type="match status" value="1"/>
</dbReference>
<dbReference type="InterPro" id="IPR029058">
    <property type="entry name" value="AB_hydrolase_fold"/>
</dbReference>
<dbReference type="InterPro" id="IPR002018">
    <property type="entry name" value="CarbesteraseB"/>
</dbReference>
<dbReference type="InterPro" id="IPR019819">
    <property type="entry name" value="Carboxylesterase_B_CS"/>
</dbReference>
<dbReference type="InterPro" id="IPR051093">
    <property type="entry name" value="Neuroligin/BSAL"/>
</dbReference>
<dbReference type="InterPro" id="IPR000460">
    <property type="entry name" value="Nlgn"/>
</dbReference>
<dbReference type="PANTHER" id="PTHR43903">
    <property type="entry name" value="NEUROLIGIN"/>
    <property type="match status" value="1"/>
</dbReference>
<dbReference type="Pfam" id="PF00135">
    <property type="entry name" value="COesterase"/>
    <property type="match status" value="1"/>
</dbReference>
<dbReference type="PRINTS" id="PR01090">
    <property type="entry name" value="NEUROLIGIN"/>
</dbReference>
<dbReference type="SUPFAM" id="SSF53474">
    <property type="entry name" value="alpha/beta-Hydrolases"/>
    <property type="match status" value="1"/>
</dbReference>
<dbReference type="PROSITE" id="PS00941">
    <property type="entry name" value="CARBOXYLESTERASE_B_2"/>
    <property type="match status" value="1"/>
</dbReference>
<gene>
    <name type="primary">Nlgn3</name>
</gene>
<accession>Q8BYM5</accession>
<accession>A2AGI1</accession>
<accession>Q8BXR4</accession>